<name>ATPE_NATTJ</name>
<keyword id="KW-0066">ATP synthesis</keyword>
<keyword id="KW-1003">Cell membrane</keyword>
<keyword id="KW-0139">CF(1)</keyword>
<keyword id="KW-0375">Hydrogen ion transport</keyword>
<keyword id="KW-0406">Ion transport</keyword>
<keyword id="KW-0472">Membrane</keyword>
<keyword id="KW-1185">Reference proteome</keyword>
<keyword id="KW-0813">Transport</keyword>
<organism>
    <name type="scientific">Natranaerobius thermophilus (strain ATCC BAA-1301 / DSM 18059 / JW/NM-WN-LF)</name>
    <dbReference type="NCBI Taxonomy" id="457570"/>
    <lineage>
        <taxon>Bacteria</taxon>
        <taxon>Bacillati</taxon>
        <taxon>Bacillota</taxon>
        <taxon>Clostridia</taxon>
        <taxon>Natranaerobiales</taxon>
        <taxon>Natranaerobiaceae</taxon>
        <taxon>Natranaerobius</taxon>
    </lineage>
</organism>
<reference key="1">
    <citation type="submission" date="2008-04" db="EMBL/GenBank/DDBJ databases">
        <title>Complete sequence of chromosome of Natranaerobius thermophilus JW/NM-WN-LF.</title>
        <authorList>
            <consortium name="US DOE Joint Genome Institute"/>
            <person name="Copeland A."/>
            <person name="Lucas S."/>
            <person name="Lapidus A."/>
            <person name="Glavina del Rio T."/>
            <person name="Dalin E."/>
            <person name="Tice H."/>
            <person name="Bruce D."/>
            <person name="Goodwin L."/>
            <person name="Pitluck S."/>
            <person name="Chertkov O."/>
            <person name="Brettin T."/>
            <person name="Detter J.C."/>
            <person name="Han C."/>
            <person name="Kuske C.R."/>
            <person name="Schmutz J."/>
            <person name="Larimer F."/>
            <person name="Land M."/>
            <person name="Hauser L."/>
            <person name="Kyrpides N."/>
            <person name="Lykidis A."/>
            <person name="Mesbah N.M."/>
            <person name="Wiegel J."/>
        </authorList>
    </citation>
    <scope>NUCLEOTIDE SEQUENCE [LARGE SCALE GENOMIC DNA]</scope>
    <source>
        <strain>ATCC BAA-1301 / DSM 18059 / JW/NM-WN-LF</strain>
    </source>
</reference>
<protein>
    <recommendedName>
        <fullName evidence="1">ATP synthase epsilon chain</fullName>
    </recommendedName>
    <alternativeName>
        <fullName evidence="1">ATP synthase F1 sector epsilon subunit</fullName>
    </alternativeName>
    <alternativeName>
        <fullName evidence="1">F-ATPase epsilon subunit</fullName>
    </alternativeName>
</protein>
<comment type="function">
    <text evidence="1">Produces ATP from ADP in the presence of a proton gradient across the membrane.</text>
</comment>
<comment type="subunit">
    <text evidence="1">F-type ATPases have 2 components, CF(1) - the catalytic core - and CF(0) - the membrane proton channel. CF(1) has five subunits: alpha(3), beta(3), gamma(1), delta(1), epsilon(1). CF(0) has three main subunits: a, b and c.</text>
</comment>
<comment type="subcellular location">
    <subcellularLocation>
        <location evidence="1">Cell membrane</location>
        <topology evidence="1">Peripheral membrane protein</topology>
    </subcellularLocation>
</comment>
<comment type="similarity">
    <text evidence="1">Belongs to the ATPase epsilon chain family.</text>
</comment>
<sequence>MARKEFQLEIVTPERIVYSDKVVSITAQAEDGRLGILHDHRPLVTKLQIAPFSFITQEGQEENVAISGSGYLEVTPQKVTVLCQTAELSHEIELERAQEAKERAEERLQASDEAIDYSRAEASLKRAIARIDAARAQRNDD</sequence>
<proteinExistence type="inferred from homology"/>
<dbReference type="EMBL" id="CP001034">
    <property type="protein sequence ID" value="ACB86390.1"/>
    <property type="molecule type" value="Genomic_DNA"/>
</dbReference>
<dbReference type="RefSeq" id="WP_012449222.1">
    <property type="nucleotide sequence ID" value="NC_010718.1"/>
</dbReference>
<dbReference type="SMR" id="B2A3G1"/>
<dbReference type="FunCoup" id="B2A3G1">
    <property type="interactions" value="368"/>
</dbReference>
<dbReference type="STRING" id="457570.Nther_2843"/>
<dbReference type="KEGG" id="nth:Nther_2843"/>
<dbReference type="eggNOG" id="COG0355">
    <property type="taxonomic scope" value="Bacteria"/>
</dbReference>
<dbReference type="HOGENOM" id="CLU_084338_1_3_9"/>
<dbReference type="InParanoid" id="B2A3G1"/>
<dbReference type="OrthoDB" id="9804110at2"/>
<dbReference type="Proteomes" id="UP000001683">
    <property type="component" value="Chromosome"/>
</dbReference>
<dbReference type="GO" id="GO:0005886">
    <property type="term" value="C:plasma membrane"/>
    <property type="evidence" value="ECO:0007669"/>
    <property type="project" value="UniProtKB-SubCell"/>
</dbReference>
<dbReference type="GO" id="GO:0045259">
    <property type="term" value="C:proton-transporting ATP synthase complex"/>
    <property type="evidence" value="ECO:0007669"/>
    <property type="project" value="UniProtKB-KW"/>
</dbReference>
<dbReference type="GO" id="GO:0005524">
    <property type="term" value="F:ATP binding"/>
    <property type="evidence" value="ECO:0007669"/>
    <property type="project" value="UniProtKB-UniRule"/>
</dbReference>
<dbReference type="GO" id="GO:0046933">
    <property type="term" value="F:proton-transporting ATP synthase activity, rotational mechanism"/>
    <property type="evidence" value="ECO:0007669"/>
    <property type="project" value="UniProtKB-UniRule"/>
</dbReference>
<dbReference type="CDD" id="cd12152">
    <property type="entry name" value="F1-ATPase_delta"/>
    <property type="match status" value="1"/>
</dbReference>
<dbReference type="FunFam" id="1.20.5.440:FF:000001">
    <property type="entry name" value="ATP synthase epsilon chain"/>
    <property type="match status" value="1"/>
</dbReference>
<dbReference type="Gene3D" id="1.20.5.440">
    <property type="entry name" value="ATP synthase delta/epsilon subunit, C-terminal domain"/>
    <property type="match status" value="1"/>
</dbReference>
<dbReference type="Gene3D" id="2.60.15.10">
    <property type="entry name" value="F0F1 ATP synthase delta/epsilon subunit, N-terminal"/>
    <property type="match status" value="1"/>
</dbReference>
<dbReference type="HAMAP" id="MF_00530">
    <property type="entry name" value="ATP_synth_epsil_bac"/>
    <property type="match status" value="1"/>
</dbReference>
<dbReference type="InterPro" id="IPR036794">
    <property type="entry name" value="ATP_F1_dsu/esu_C_sf"/>
</dbReference>
<dbReference type="InterPro" id="IPR001469">
    <property type="entry name" value="ATP_synth_F1_dsu/esu"/>
</dbReference>
<dbReference type="InterPro" id="IPR020546">
    <property type="entry name" value="ATP_synth_F1_dsu/esu_N"/>
</dbReference>
<dbReference type="InterPro" id="IPR020547">
    <property type="entry name" value="ATP_synth_F1_esu_C"/>
</dbReference>
<dbReference type="InterPro" id="IPR036771">
    <property type="entry name" value="ATPsynth_dsu/esu_N"/>
</dbReference>
<dbReference type="NCBIfam" id="TIGR01216">
    <property type="entry name" value="ATP_synt_epsi"/>
    <property type="match status" value="1"/>
</dbReference>
<dbReference type="NCBIfam" id="NF009980">
    <property type="entry name" value="PRK13446.1"/>
    <property type="match status" value="1"/>
</dbReference>
<dbReference type="PANTHER" id="PTHR13822">
    <property type="entry name" value="ATP SYNTHASE DELTA/EPSILON CHAIN"/>
    <property type="match status" value="1"/>
</dbReference>
<dbReference type="PANTHER" id="PTHR13822:SF10">
    <property type="entry name" value="ATP SYNTHASE EPSILON CHAIN, CHLOROPLASTIC"/>
    <property type="match status" value="1"/>
</dbReference>
<dbReference type="Pfam" id="PF00401">
    <property type="entry name" value="ATP-synt_DE"/>
    <property type="match status" value="1"/>
</dbReference>
<dbReference type="Pfam" id="PF02823">
    <property type="entry name" value="ATP-synt_DE_N"/>
    <property type="match status" value="1"/>
</dbReference>
<dbReference type="SUPFAM" id="SSF46604">
    <property type="entry name" value="Epsilon subunit of F1F0-ATP synthase C-terminal domain"/>
    <property type="match status" value="1"/>
</dbReference>
<dbReference type="SUPFAM" id="SSF51344">
    <property type="entry name" value="Epsilon subunit of F1F0-ATP synthase N-terminal domain"/>
    <property type="match status" value="1"/>
</dbReference>
<gene>
    <name evidence="1" type="primary">atpC</name>
    <name type="ordered locus">Nther_2843</name>
</gene>
<evidence type="ECO:0000255" key="1">
    <source>
        <dbReference type="HAMAP-Rule" id="MF_00530"/>
    </source>
</evidence>
<feature type="chain" id="PRO_1000146340" description="ATP synthase epsilon chain">
    <location>
        <begin position="1"/>
        <end position="141"/>
    </location>
</feature>
<accession>B2A3G1</accession>